<dbReference type="EC" id="6.3.5.2"/>
<dbReference type="EMBL" id="BA000011">
    <property type="protein sequence ID" value="BAB59438.1"/>
    <property type="molecule type" value="Genomic_DNA"/>
</dbReference>
<dbReference type="RefSeq" id="WP_010916551.1">
    <property type="nucleotide sequence ID" value="NC_002689.2"/>
</dbReference>
<dbReference type="SMR" id="Q97C09"/>
<dbReference type="STRING" id="273116.gene:9381070"/>
<dbReference type="PaxDb" id="273116-14324511"/>
<dbReference type="GeneID" id="1440809"/>
<dbReference type="KEGG" id="tvo:TVG0306280"/>
<dbReference type="eggNOG" id="arCOG00085">
    <property type="taxonomic scope" value="Archaea"/>
</dbReference>
<dbReference type="HOGENOM" id="CLU_014340_0_0_2"/>
<dbReference type="OrthoDB" id="33844at2157"/>
<dbReference type="PhylomeDB" id="Q97C09"/>
<dbReference type="UniPathway" id="UPA00189">
    <property type="reaction ID" value="UER00296"/>
</dbReference>
<dbReference type="Proteomes" id="UP000001017">
    <property type="component" value="Chromosome"/>
</dbReference>
<dbReference type="GO" id="GO:0005829">
    <property type="term" value="C:cytosol"/>
    <property type="evidence" value="ECO:0007669"/>
    <property type="project" value="TreeGrafter"/>
</dbReference>
<dbReference type="GO" id="GO:0005524">
    <property type="term" value="F:ATP binding"/>
    <property type="evidence" value="ECO:0007669"/>
    <property type="project" value="UniProtKB-UniRule"/>
</dbReference>
<dbReference type="GO" id="GO:0003921">
    <property type="term" value="F:GMP synthase activity"/>
    <property type="evidence" value="ECO:0007669"/>
    <property type="project" value="InterPro"/>
</dbReference>
<dbReference type="CDD" id="cd01997">
    <property type="entry name" value="GMP_synthase_C"/>
    <property type="match status" value="1"/>
</dbReference>
<dbReference type="FunFam" id="3.30.300.10:FF:000002">
    <property type="entry name" value="GMP synthase [glutamine-hydrolyzing]"/>
    <property type="match status" value="1"/>
</dbReference>
<dbReference type="Gene3D" id="3.30.300.10">
    <property type="match status" value="1"/>
</dbReference>
<dbReference type="Gene3D" id="3.40.50.620">
    <property type="entry name" value="HUPs"/>
    <property type="match status" value="1"/>
</dbReference>
<dbReference type="HAMAP" id="MF_00345">
    <property type="entry name" value="GMP_synthase_B"/>
    <property type="match status" value="1"/>
</dbReference>
<dbReference type="InterPro" id="IPR001674">
    <property type="entry name" value="GMP_synth_C"/>
</dbReference>
<dbReference type="InterPro" id="IPR026598">
    <property type="entry name" value="GMP_synthase_B"/>
</dbReference>
<dbReference type="InterPro" id="IPR025777">
    <property type="entry name" value="GMPS_ATP_PPase_dom"/>
</dbReference>
<dbReference type="InterPro" id="IPR022310">
    <property type="entry name" value="NAD/GMP_synthase"/>
</dbReference>
<dbReference type="InterPro" id="IPR014729">
    <property type="entry name" value="Rossmann-like_a/b/a_fold"/>
</dbReference>
<dbReference type="NCBIfam" id="TIGR00884">
    <property type="entry name" value="guaA_Cterm"/>
    <property type="match status" value="1"/>
</dbReference>
<dbReference type="PANTHER" id="PTHR11922:SF2">
    <property type="entry name" value="GMP SYNTHASE [GLUTAMINE-HYDROLYZING]"/>
    <property type="match status" value="1"/>
</dbReference>
<dbReference type="PANTHER" id="PTHR11922">
    <property type="entry name" value="GMP SYNTHASE-RELATED"/>
    <property type="match status" value="1"/>
</dbReference>
<dbReference type="Pfam" id="PF00958">
    <property type="entry name" value="GMP_synt_C"/>
    <property type="match status" value="1"/>
</dbReference>
<dbReference type="Pfam" id="PF02540">
    <property type="entry name" value="NAD_synthase"/>
    <property type="match status" value="1"/>
</dbReference>
<dbReference type="SUPFAM" id="SSF52402">
    <property type="entry name" value="Adenine nucleotide alpha hydrolases-like"/>
    <property type="match status" value="1"/>
</dbReference>
<dbReference type="SUPFAM" id="SSF54810">
    <property type="entry name" value="GMP synthetase C-terminal dimerisation domain"/>
    <property type="match status" value="1"/>
</dbReference>
<dbReference type="PROSITE" id="PS51553">
    <property type="entry name" value="GMPS_ATP_PPASE"/>
    <property type="match status" value="1"/>
</dbReference>
<sequence>MSFSDYISRIKDNIRNSIKGKAIIAVSGGQDSSLLSLLASEVLGNNLLCVFIDTGLLRKNETGRVKDFFEKHSMNYVIVDAADTFINNLKGVTDPEEKRKIIGKTFIDVLSEQAQNFGAEYLLQGTIAPDWIESGGQKRDTIKSHHNVGGLPKDMKLKLVEPLRDYYKDEIRGMSKELGLPTDIQPFPGPGLAVRIIGEVTKEKLDLLRAVTDIVERKISEAMPSESRPWQYFAVLLPVRTTGVHGDRRAYGLTVGIRMIETTDAMTGTFSKPSWDLLEDISNTITDEIPEINRVVYDITNKPPATIEWE</sequence>
<organism>
    <name type="scientific">Thermoplasma volcanium (strain ATCC 51530 / DSM 4299 / JCM 9571 / NBRC 15438 / GSS1)</name>
    <dbReference type="NCBI Taxonomy" id="273116"/>
    <lineage>
        <taxon>Archaea</taxon>
        <taxon>Methanobacteriati</taxon>
        <taxon>Thermoplasmatota</taxon>
        <taxon>Thermoplasmata</taxon>
        <taxon>Thermoplasmatales</taxon>
        <taxon>Thermoplasmataceae</taxon>
        <taxon>Thermoplasma</taxon>
    </lineage>
</organism>
<accession>Q97C09</accession>
<name>GUAAB_THEVO</name>
<keyword id="KW-0067">ATP-binding</keyword>
<keyword id="KW-0332">GMP biosynthesis</keyword>
<keyword id="KW-0436">Ligase</keyword>
<keyword id="KW-0547">Nucleotide-binding</keyword>
<keyword id="KW-0658">Purine biosynthesis</keyword>
<feature type="chain" id="PRO_0000140254" description="GMP synthase [glutamine-hydrolyzing] subunit B">
    <location>
        <begin position="1"/>
        <end position="310"/>
    </location>
</feature>
<feature type="domain" description="GMPS ATP-PPase">
    <location>
        <begin position="1"/>
        <end position="187"/>
    </location>
</feature>
<feature type="binding site" evidence="1">
    <location>
        <begin position="27"/>
        <end position="33"/>
    </location>
    <ligand>
        <name>ATP</name>
        <dbReference type="ChEBI" id="CHEBI:30616"/>
    </ligand>
</feature>
<proteinExistence type="inferred from homology"/>
<protein>
    <recommendedName>
        <fullName>GMP synthase [glutamine-hydrolyzing] subunit B</fullName>
        <ecNumber>6.3.5.2</ecNumber>
    </recommendedName>
    <alternativeName>
        <fullName>GMP synthetase</fullName>
    </alternativeName>
</protein>
<comment type="function">
    <text evidence="1">Catalyzes the synthesis of GMP from XMP.</text>
</comment>
<comment type="catalytic activity">
    <reaction>
        <text>XMP + L-glutamine + ATP + H2O = GMP + L-glutamate + AMP + diphosphate + 2 H(+)</text>
        <dbReference type="Rhea" id="RHEA:11680"/>
        <dbReference type="ChEBI" id="CHEBI:15377"/>
        <dbReference type="ChEBI" id="CHEBI:15378"/>
        <dbReference type="ChEBI" id="CHEBI:29985"/>
        <dbReference type="ChEBI" id="CHEBI:30616"/>
        <dbReference type="ChEBI" id="CHEBI:33019"/>
        <dbReference type="ChEBI" id="CHEBI:57464"/>
        <dbReference type="ChEBI" id="CHEBI:58115"/>
        <dbReference type="ChEBI" id="CHEBI:58359"/>
        <dbReference type="ChEBI" id="CHEBI:456215"/>
        <dbReference type="EC" id="6.3.5.2"/>
    </reaction>
</comment>
<comment type="pathway">
    <text>Purine metabolism; GMP biosynthesis; GMP from XMP (L-Gln route): step 1/1.</text>
</comment>
<comment type="subunit">
    <text evidence="2">Heterodimer composed of a glutamine amidotransferase subunit (A) and a GMP-binding subunit (B).</text>
</comment>
<evidence type="ECO:0000250" key="1"/>
<evidence type="ECO:0000305" key="2"/>
<gene>
    <name type="primary">guaAB</name>
    <name type="ordered locus">TV0296</name>
    <name type="ORF">TVG0306280</name>
</gene>
<reference key="1">
    <citation type="journal article" date="2000" name="Proc. Natl. Acad. Sci. U.S.A.">
        <title>Archaeal adaptation to higher temperatures revealed by genomic sequence of Thermoplasma volcanium.</title>
        <authorList>
            <person name="Kawashima T."/>
            <person name="Amano N."/>
            <person name="Koike H."/>
            <person name="Makino S."/>
            <person name="Higuchi S."/>
            <person name="Kawashima-Ohya Y."/>
            <person name="Watanabe K."/>
            <person name="Yamazaki M."/>
            <person name="Kanehori K."/>
            <person name="Kawamoto T."/>
            <person name="Nunoshiba T."/>
            <person name="Yamamoto Y."/>
            <person name="Aramaki H."/>
            <person name="Makino K."/>
            <person name="Suzuki M."/>
        </authorList>
    </citation>
    <scope>NUCLEOTIDE SEQUENCE [LARGE SCALE GENOMIC DNA]</scope>
    <source>
        <strain>ATCC 51530 / DSM 4299 / JCM 9571 / NBRC 15438 / GSS1</strain>
    </source>
</reference>